<dbReference type="EMBL" id="AJ242797">
    <property type="protein sequence ID" value="CAB56827.1"/>
    <property type="molecule type" value="Genomic_DNA"/>
</dbReference>
<dbReference type="EMBL" id="AJ242798">
    <property type="protein sequence ID" value="CAB56828.1"/>
    <property type="molecule type" value="Genomic_DNA"/>
</dbReference>
<dbReference type="EMBL" id="AJ242799">
    <property type="protein sequence ID" value="CAB56829.1"/>
    <property type="molecule type" value="Genomic_DNA"/>
</dbReference>
<dbReference type="EMBL" id="BC102940">
    <property type="protein sequence ID" value="AAI02941.1"/>
    <property type="molecule type" value="mRNA"/>
</dbReference>
<dbReference type="EMBL" id="BC133477">
    <property type="protein sequence ID" value="AAI33478.1"/>
    <property type="molecule type" value="mRNA"/>
</dbReference>
<dbReference type="PIR" id="A02289">
    <property type="entry name" value="HABO"/>
</dbReference>
<dbReference type="RefSeq" id="NP_001070890.2">
    <property type="nucleotide sequence ID" value="NM_001077422.3"/>
</dbReference>
<dbReference type="RefSeq" id="XP_001788728.1">
    <property type="nucleotide sequence ID" value="XM_001788676.4"/>
</dbReference>
<dbReference type="PDB" id="1FSX">
    <property type="method" value="X-ray"/>
    <property type="resolution" value="2.10 A"/>
    <property type="chains" value="A/C=2-142"/>
</dbReference>
<dbReference type="PDB" id="1G08">
    <property type="method" value="X-ray"/>
    <property type="resolution" value="1.90 A"/>
    <property type="chains" value="A/C=2-142"/>
</dbReference>
<dbReference type="PDB" id="1G09">
    <property type="method" value="X-ray"/>
    <property type="resolution" value="2.04 A"/>
    <property type="chains" value="A/C=2-142"/>
</dbReference>
<dbReference type="PDB" id="1G0A">
    <property type="method" value="X-ray"/>
    <property type="resolution" value="2.04 A"/>
    <property type="chains" value="A/C=2-142"/>
</dbReference>
<dbReference type="PDB" id="1HDA">
    <property type="method" value="X-ray"/>
    <property type="resolution" value="2.20 A"/>
    <property type="chains" value="A/C=2-142"/>
</dbReference>
<dbReference type="PDB" id="2QSP">
    <property type="method" value="X-ray"/>
    <property type="resolution" value="1.85 A"/>
    <property type="chains" value="A/C=2-142"/>
</dbReference>
<dbReference type="PDB" id="2QSS">
    <property type="method" value="X-ray"/>
    <property type="resolution" value="1.75 A"/>
    <property type="chains" value="A/C=2-142"/>
</dbReference>
<dbReference type="PDB" id="3CIU">
    <property type="method" value="X-ray"/>
    <property type="resolution" value="3.50 A"/>
    <property type="chains" value="A/C=2-142"/>
</dbReference>
<dbReference type="PDB" id="3PI8">
    <property type="method" value="X-ray"/>
    <property type="resolution" value="2.20 A"/>
    <property type="chains" value="A/C=2-142"/>
</dbReference>
<dbReference type="PDB" id="3PI9">
    <property type="method" value="X-ray"/>
    <property type="resolution" value="2.90 A"/>
    <property type="chains" value="A/C=2-142"/>
</dbReference>
<dbReference type="PDB" id="3PIA">
    <property type="method" value="X-ray"/>
    <property type="resolution" value="2.10 A"/>
    <property type="chains" value="A/C=2-142"/>
</dbReference>
<dbReference type="PDB" id="6IHX">
    <property type="method" value="X-ray"/>
    <property type="resolution" value="1.46 A"/>
    <property type="chains" value="A/C=2-141"/>
</dbReference>
<dbReference type="PDB" id="6II1">
    <property type="method" value="X-ray"/>
    <property type="resolution" value="1.34 A"/>
    <property type="chains" value="A/C=2-139"/>
</dbReference>
<dbReference type="PDBsum" id="1FSX"/>
<dbReference type="PDBsum" id="1G08"/>
<dbReference type="PDBsum" id="1G09"/>
<dbReference type="PDBsum" id="1G0A"/>
<dbReference type="PDBsum" id="1HDA"/>
<dbReference type="PDBsum" id="2QSP"/>
<dbReference type="PDBsum" id="2QSS"/>
<dbReference type="PDBsum" id="3CIU"/>
<dbReference type="PDBsum" id="3PI8"/>
<dbReference type="PDBsum" id="3PI9"/>
<dbReference type="PDBsum" id="3PIA"/>
<dbReference type="PDBsum" id="6IHX"/>
<dbReference type="PDBsum" id="6II1"/>
<dbReference type="BMRB" id="P01966"/>
<dbReference type="EMDB" id="EMD-12978"/>
<dbReference type="SMR" id="P01966"/>
<dbReference type="BioGRID" id="169070">
    <property type="interactions" value="1"/>
</dbReference>
<dbReference type="FunCoup" id="P01966">
    <property type="interactions" value="87"/>
</dbReference>
<dbReference type="STRING" id="9913.ENSBTAP00000037374"/>
<dbReference type="Allergome" id="8242">
    <property type="allergen name" value="Bos d HG"/>
</dbReference>
<dbReference type="GlyGen" id="P01966">
    <property type="glycosylation" value="1 site, 1 O-linked glycan (1 site)"/>
</dbReference>
<dbReference type="PaxDb" id="9913-ENSBTAP00000022034"/>
<dbReference type="PeptideAtlas" id="P01966"/>
<dbReference type="GeneID" id="512439"/>
<dbReference type="KEGG" id="bta:100140149"/>
<dbReference type="KEGG" id="bta:512439"/>
<dbReference type="CTD" id="15121"/>
<dbReference type="CTD" id="3039"/>
<dbReference type="VEuPathDB" id="HostDB:ENSBTAG00000051412"/>
<dbReference type="eggNOG" id="KOG3378">
    <property type="taxonomic scope" value="Eukaryota"/>
</dbReference>
<dbReference type="HOGENOM" id="CLU_003827_10_2_1"/>
<dbReference type="InParanoid" id="P01966"/>
<dbReference type="OMA" id="MFTSFPT"/>
<dbReference type="OrthoDB" id="8751793at2759"/>
<dbReference type="TreeFam" id="TF332328"/>
<dbReference type="Reactome" id="R-BTA-1237044">
    <property type="pathway name" value="Erythrocytes take up carbon dioxide and release oxygen"/>
</dbReference>
<dbReference type="Reactome" id="R-BTA-1247673">
    <property type="pathway name" value="Erythrocytes take up oxygen and release carbon dioxide"/>
</dbReference>
<dbReference type="Reactome" id="R-BTA-2168880">
    <property type="pathway name" value="Scavenging of heme from plasma"/>
</dbReference>
<dbReference type="Reactome" id="R-BTA-9707564">
    <property type="pathway name" value="Cytoprotection by HMOX1"/>
</dbReference>
<dbReference type="Reactome" id="R-BTA-9707616">
    <property type="pathway name" value="Heme signaling"/>
</dbReference>
<dbReference type="EvolutionaryTrace" id="P01966"/>
<dbReference type="Proteomes" id="UP000009136">
    <property type="component" value="Chromosome 25"/>
</dbReference>
<dbReference type="Bgee" id="ENSBTAG00000051412">
    <property type="expression patterns" value="Expressed in floor plate of diencephalon and 104 other cell types or tissues"/>
</dbReference>
<dbReference type="GO" id="GO:0031838">
    <property type="term" value="C:haptoglobin-hemoglobin complex"/>
    <property type="evidence" value="ECO:0000318"/>
    <property type="project" value="GO_Central"/>
</dbReference>
<dbReference type="GO" id="GO:0005833">
    <property type="term" value="C:hemoglobin complex"/>
    <property type="evidence" value="ECO:0000318"/>
    <property type="project" value="GO_Central"/>
</dbReference>
<dbReference type="GO" id="GO:0020037">
    <property type="term" value="F:heme binding"/>
    <property type="evidence" value="ECO:0000318"/>
    <property type="project" value="GO_Central"/>
</dbReference>
<dbReference type="GO" id="GO:0005506">
    <property type="term" value="F:iron ion binding"/>
    <property type="evidence" value="ECO:0007669"/>
    <property type="project" value="InterPro"/>
</dbReference>
<dbReference type="GO" id="GO:0019825">
    <property type="term" value="F:oxygen binding"/>
    <property type="evidence" value="ECO:0000318"/>
    <property type="project" value="GO_Central"/>
</dbReference>
<dbReference type="GO" id="GO:0005344">
    <property type="term" value="F:oxygen carrier activity"/>
    <property type="evidence" value="ECO:0000318"/>
    <property type="project" value="GO_Central"/>
</dbReference>
<dbReference type="GO" id="GO:0098869">
    <property type="term" value="P:cellular oxidant detoxification"/>
    <property type="evidence" value="ECO:0007669"/>
    <property type="project" value="GOC"/>
</dbReference>
<dbReference type="GO" id="GO:0042744">
    <property type="term" value="P:hydrogen peroxide catabolic process"/>
    <property type="evidence" value="ECO:0000318"/>
    <property type="project" value="GO_Central"/>
</dbReference>
<dbReference type="CDD" id="cd08927">
    <property type="entry name" value="Hb-alpha-like"/>
    <property type="match status" value="1"/>
</dbReference>
<dbReference type="FunFam" id="1.10.490.10:FF:000002">
    <property type="entry name" value="Hemoglobin subunit alpha"/>
    <property type="match status" value="1"/>
</dbReference>
<dbReference type="Gene3D" id="1.10.490.10">
    <property type="entry name" value="Globins"/>
    <property type="match status" value="1"/>
</dbReference>
<dbReference type="InterPro" id="IPR000971">
    <property type="entry name" value="Globin"/>
</dbReference>
<dbReference type="InterPro" id="IPR009050">
    <property type="entry name" value="Globin-like_sf"/>
</dbReference>
<dbReference type="InterPro" id="IPR012292">
    <property type="entry name" value="Globin/Proto"/>
</dbReference>
<dbReference type="InterPro" id="IPR002338">
    <property type="entry name" value="Hemoglobin_a-typ"/>
</dbReference>
<dbReference type="InterPro" id="IPR050056">
    <property type="entry name" value="Hemoglobin_oxygen_transport"/>
</dbReference>
<dbReference type="InterPro" id="IPR002339">
    <property type="entry name" value="Hemoglobin_pi"/>
</dbReference>
<dbReference type="PANTHER" id="PTHR11442">
    <property type="entry name" value="HEMOGLOBIN FAMILY MEMBER"/>
    <property type="match status" value="1"/>
</dbReference>
<dbReference type="PANTHER" id="PTHR11442:SF48">
    <property type="entry name" value="HEMOGLOBIN SUBUNIT ALPHA"/>
    <property type="match status" value="1"/>
</dbReference>
<dbReference type="Pfam" id="PF00042">
    <property type="entry name" value="Globin"/>
    <property type="match status" value="1"/>
</dbReference>
<dbReference type="PRINTS" id="PR00612">
    <property type="entry name" value="ALPHAHAEM"/>
</dbReference>
<dbReference type="PRINTS" id="PR00815">
    <property type="entry name" value="PIHAEM"/>
</dbReference>
<dbReference type="SUPFAM" id="SSF46458">
    <property type="entry name" value="Globin-like"/>
    <property type="match status" value="1"/>
</dbReference>
<dbReference type="PROSITE" id="PS01033">
    <property type="entry name" value="GLOBIN"/>
    <property type="match status" value="1"/>
</dbReference>
<proteinExistence type="evidence at protein level"/>
<keyword id="KW-0002">3D-structure</keyword>
<keyword id="KW-0007">Acetylation</keyword>
<keyword id="KW-0903">Direct protein sequencing</keyword>
<keyword id="KW-0349">Heme</keyword>
<keyword id="KW-0408">Iron</keyword>
<keyword id="KW-0479">Metal-binding</keyword>
<keyword id="KW-0561">Oxygen transport</keyword>
<keyword id="KW-0597">Phosphoprotein</keyword>
<keyword id="KW-1185">Reference proteome</keyword>
<keyword id="KW-0813">Transport</keyword>
<reference key="1">
    <citation type="submission" date="1999-05" db="EMBL/GenBank/DDBJ databases">
        <title>Nucleotide sequence of Podolian cattle (Bos taurus primigenius) alpha globin genes.</title>
        <authorList>
            <person name="Rullo R."/>
            <person name="Pieragostini E."/>
            <person name="Vincenti D."/>
            <person name="Campanile C."/>
            <person name="Di Luccia A."/>
        </authorList>
    </citation>
    <scope>NUCLEOTIDE SEQUENCE [GENOMIC DNA] (ALLELES N; S AND Y)</scope>
    <source>
        <strain>Podolian</strain>
    </source>
</reference>
<reference key="2">
    <citation type="submission" date="2007-02" db="EMBL/GenBank/DDBJ databases">
        <authorList>
            <consortium name="NIH - Mammalian Gene Collection (MGC) project"/>
        </authorList>
    </citation>
    <scope>NUCLEOTIDE SEQUENCE [LARGE SCALE MRNA]</scope>
    <source>
        <strain>Hereford</strain>
        <tissue>Fetal liver</tissue>
    </source>
</reference>
<reference key="3">
    <citation type="journal article" date="1967" name="Arch. Biochem. Biophys.">
        <title>Amino acid sequence of the alpha-chain of bovine fetal hemoglobin.</title>
        <authorList>
            <person name="Schroeder W.A."/>
            <person name="Shelton J.R."/>
            <person name="Shelton J.B."/>
            <person name="Robberson B."/>
            <person name="Babin D.R."/>
        </authorList>
    </citation>
    <scope>PROTEIN SEQUENCE OF 2-142</scope>
    <source>
        <strain>Holstein</strain>
    </source>
</reference>
<reference key="4">
    <citation type="journal article" date="1989" name="J. Neurochem.">
        <title>Predominant low-molecular-weight proteins in isolated brain capillaries are histones.</title>
        <authorList>
            <person name="Pardridge W.M."/>
            <person name="Nowlin D.M."/>
            <person name="Calaycay J."/>
            <person name="Shively J.E."/>
        </authorList>
    </citation>
    <scope>PROTEIN SEQUENCE OF 2-24</scope>
    <source>
        <tissue>Brain capillary</tissue>
    </source>
</reference>
<reference key="5">
    <citation type="journal article" date="1993" name="J. Mol. Biol.">
        <title>A novel allosteric mechanism in haemoglobin. Structure of bovine deoxyhaemoglobin, absence of specific chloride-binding sites and origin of the chloride-linked Bohr effect in bovine and human haemoglobin.</title>
        <authorList>
            <person name="Perutz M.F."/>
            <person name="Fermi G."/>
            <person name="Poyart C."/>
            <person name="Pagnier J."/>
            <person name="Kister J."/>
        </authorList>
    </citation>
    <scope>X-RAY CRYSTALLOGRAPHY (2.2 ANGSTROMS)</scope>
</reference>
<reference key="6">
    <citation type="journal article" date="2001" name="Protein Sci.">
        <title>The X-ray structure determination of bovine carbonmonoxy hemoglobin at 2.1 A resolution and its relationship to the quaternary structures of other hemoglobin crystal forms.</title>
        <authorList>
            <person name="Safo M.K."/>
            <person name="Abraham D.J."/>
        </authorList>
    </citation>
    <scope>X-RAY CRYSTALLOGRAPHY (2.1 ANGSTROMS)</scope>
</reference>
<comment type="function">
    <text>Involved in oxygen transport from the lung to the various peripheral tissues.</text>
</comment>
<comment type="function">
    <molecule>Hemopressin</molecule>
    <text evidence="2">Hemopressin acts as an antagonist peptide of the cannabinoid receptor CNR1. Hemopressin-binding efficiently blocks cannabinoid receptor CNR1 and subsequent signaling.</text>
</comment>
<comment type="subunit">
    <text>Heterotetramer of two alpha chains and two beta chains.</text>
</comment>
<comment type="tissue specificity">
    <text>Red blood cells.</text>
</comment>
<comment type="polymorphism">
    <text evidence="7">There are 3 alleles in Podolian cattle; N, S and Y.</text>
</comment>
<comment type="similarity">
    <text evidence="4">Belongs to the globin family.</text>
</comment>
<feature type="initiator methionine" description="Removed" evidence="5 6">
    <location>
        <position position="1"/>
    </location>
</feature>
<feature type="chain" id="PRO_0000052568" description="Hemoglobin subunit alpha">
    <location>
        <begin position="2"/>
        <end position="142"/>
    </location>
</feature>
<feature type="peptide" id="PRO_0000455842" description="Hemopressin" evidence="2">
    <location>
        <begin position="96"/>
        <end position="104"/>
    </location>
</feature>
<feature type="domain" description="Globin" evidence="4">
    <location>
        <begin position="2"/>
        <end position="142"/>
    </location>
</feature>
<feature type="binding site" evidence="4">
    <location>
        <position position="59"/>
    </location>
    <ligand>
        <name>O2</name>
        <dbReference type="ChEBI" id="CHEBI:15379"/>
    </ligand>
</feature>
<feature type="binding site" description="proximal binding residue" evidence="4">
    <location>
        <position position="88"/>
    </location>
    <ligand>
        <name>heme b</name>
        <dbReference type="ChEBI" id="CHEBI:60344"/>
    </ligand>
    <ligandPart>
        <name>Fe</name>
        <dbReference type="ChEBI" id="CHEBI:18248"/>
    </ligandPart>
</feature>
<feature type="modified residue" description="Phosphoserine" evidence="3">
    <location>
        <position position="4"/>
    </location>
</feature>
<feature type="modified residue" description="N6-succinyllysine" evidence="1">
    <location>
        <position position="8"/>
    </location>
</feature>
<feature type="modified residue" description="N6-succinyllysine" evidence="1">
    <location>
        <position position="12"/>
    </location>
</feature>
<feature type="modified residue" description="N6-acetyllysine; alternate" evidence="3">
    <location>
        <position position="17"/>
    </location>
</feature>
<feature type="modified residue" description="N6-succinyllysine; alternate" evidence="1">
    <location>
        <position position="17"/>
    </location>
</feature>
<feature type="modified residue" description="Phosphotyrosine" evidence="3">
    <location>
        <position position="25"/>
    </location>
</feature>
<feature type="modified residue" description="Phosphoserine" evidence="3">
    <location>
        <position position="36"/>
    </location>
</feature>
<feature type="modified residue" description="N6-succinyllysine" evidence="1">
    <location>
        <position position="41"/>
    </location>
</feature>
<feature type="modified residue" description="Phosphoserine" evidence="3">
    <location>
        <position position="50"/>
    </location>
</feature>
<feature type="modified residue" description="Phosphoserine" evidence="1">
    <location>
        <position position="103"/>
    </location>
</feature>
<feature type="modified residue" description="Phosphothreonine" evidence="1">
    <location>
        <position position="109"/>
    </location>
</feature>
<feature type="modified residue" description="Phosphoserine" evidence="1">
    <location>
        <position position="125"/>
    </location>
</feature>
<feature type="modified residue" description="Phosphothreonine" evidence="1">
    <location>
        <position position="135"/>
    </location>
</feature>
<feature type="modified residue" description="Phosphothreonine" evidence="1">
    <location>
        <position position="138"/>
    </location>
</feature>
<feature type="modified residue" description="Phosphoserine" evidence="1">
    <location>
        <position position="139"/>
    </location>
</feature>
<feature type="sequence variant" description="In allele Y." evidence="7">
    <original>H</original>
    <variation>Y</variation>
    <location>
        <position position="90"/>
    </location>
</feature>
<feature type="sequence variant" description="In allele S." evidence="7">
    <original>N</original>
    <variation>S</variation>
    <location>
        <position position="132"/>
    </location>
</feature>
<feature type="helix" evidence="10">
    <location>
        <begin position="5"/>
        <end position="18"/>
    </location>
</feature>
<feature type="helix" evidence="10">
    <location>
        <begin position="19"/>
        <end position="21"/>
    </location>
</feature>
<feature type="helix" evidence="10">
    <location>
        <begin position="22"/>
        <end position="36"/>
    </location>
</feature>
<feature type="helix" evidence="10">
    <location>
        <begin position="38"/>
        <end position="43"/>
    </location>
</feature>
<feature type="strand" evidence="8">
    <location>
        <begin position="45"/>
        <end position="47"/>
    </location>
</feature>
<feature type="helix" evidence="10">
    <location>
        <begin position="54"/>
        <end position="72"/>
    </location>
</feature>
<feature type="helix" evidence="10">
    <location>
        <begin position="73"/>
        <end position="76"/>
    </location>
</feature>
<feature type="helix" evidence="10">
    <location>
        <begin position="77"/>
        <end position="80"/>
    </location>
</feature>
<feature type="helix" evidence="10">
    <location>
        <begin position="82"/>
        <end position="89"/>
    </location>
</feature>
<feature type="helix" evidence="10">
    <location>
        <begin position="96"/>
        <end position="113"/>
    </location>
</feature>
<feature type="turn" evidence="10">
    <location>
        <begin position="115"/>
        <end position="117"/>
    </location>
</feature>
<feature type="helix" evidence="10">
    <location>
        <begin position="120"/>
        <end position="137"/>
    </location>
</feature>
<feature type="turn" evidence="9">
    <location>
        <begin position="138"/>
        <end position="140"/>
    </location>
</feature>
<protein>
    <recommendedName>
        <fullName>Hemoglobin subunit alpha</fullName>
    </recommendedName>
    <alternativeName>
        <fullName>Alpha-globin</fullName>
    </alternativeName>
    <alternativeName>
        <fullName>Hemoglobin alpha chain</fullName>
    </alternativeName>
    <component>
        <recommendedName>
            <fullName evidence="2">Hemopressin</fullName>
        </recommendedName>
    </component>
</protein>
<gene>
    <name type="primary">HBA</name>
</gene>
<organism>
    <name type="scientific">Bos taurus</name>
    <name type="common">Bovine</name>
    <dbReference type="NCBI Taxonomy" id="9913"/>
    <lineage>
        <taxon>Eukaryota</taxon>
        <taxon>Metazoa</taxon>
        <taxon>Chordata</taxon>
        <taxon>Craniata</taxon>
        <taxon>Vertebrata</taxon>
        <taxon>Euteleostomi</taxon>
        <taxon>Mammalia</taxon>
        <taxon>Eutheria</taxon>
        <taxon>Laurasiatheria</taxon>
        <taxon>Artiodactyla</taxon>
        <taxon>Ruminantia</taxon>
        <taxon>Pecora</taxon>
        <taxon>Bovidae</taxon>
        <taxon>Bovinae</taxon>
        <taxon>Bos</taxon>
    </lineage>
</organism>
<sequence>MVLSAADKGNVKAAWGKVGGHAAEYGAEALERMFLSFPTTKTYFPHFDLSHGSAQVKGHGAKVAAALTKAVEHLDDLPGALSELSDLHAHKLRVDPVNFKLLSHSLLVTLASHLPSDFTPAVHASLDKFLANVSTVLTSKYR</sequence>
<name>HBA_BOVIN</name>
<evidence type="ECO:0000250" key="1">
    <source>
        <dbReference type="UniProtKB" id="P01942"/>
    </source>
</evidence>
<evidence type="ECO:0000250" key="2">
    <source>
        <dbReference type="UniProtKB" id="P01946"/>
    </source>
</evidence>
<evidence type="ECO:0000250" key="3">
    <source>
        <dbReference type="UniProtKB" id="P69905"/>
    </source>
</evidence>
<evidence type="ECO:0000255" key="4">
    <source>
        <dbReference type="PROSITE-ProRule" id="PRU00238"/>
    </source>
</evidence>
<evidence type="ECO:0000269" key="5">
    <source>
    </source>
</evidence>
<evidence type="ECO:0000269" key="6">
    <source>
    </source>
</evidence>
<evidence type="ECO:0000269" key="7">
    <source ref="1"/>
</evidence>
<evidence type="ECO:0007829" key="8">
    <source>
        <dbReference type="PDB" id="3CIU"/>
    </source>
</evidence>
<evidence type="ECO:0007829" key="9">
    <source>
        <dbReference type="PDB" id="6IHX"/>
    </source>
</evidence>
<evidence type="ECO:0007829" key="10">
    <source>
        <dbReference type="PDB" id="6II1"/>
    </source>
</evidence>
<accession>P01966</accession>
<accession>A3KN13</accession>
<accession>Q3SZE0</accession>
<accession>Q9TTR9</accession>
<accession>Q9TTS0</accession>
<accession>Q9TTS1</accession>